<reference key="1">
    <citation type="journal article" date="1996" name="Nucleic Acids Res.">
        <title>Complete sequence analysis of the genome of the bacterium Mycoplasma pneumoniae.</title>
        <authorList>
            <person name="Himmelreich R."/>
            <person name="Hilbert H."/>
            <person name="Plagens H."/>
            <person name="Pirkl E."/>
            <person name="Li B.-C."/>
            <person name="Herrmann R."/>
        </authorList>
    </citation>
    <scope>NUCLEOTIDE SEQUENCE [LARGE SCALE GENOMIC DNA]</scope>
    <source>
        <strain>ATCC 29342 / M129 / Subtype 1</strain>
    </source>
</reference>
<comment type="similarity">
    <text evidence="1">Belongs to the UPF0134 family.</text>
</comment>
<organism>
    <name type="scientific">Mycoplasma pneumoniae (strain ATCC 29342 / M129 / Subtype 1)</name>
    <name type="common">Mycoplasmoides pneumoniae</name>
    <dbReference type="NCBI Taxonomy" id="272634"/>
    <lineage>
        <taxon>Bacteria</taxon>
        <taxon>Bacillati</taxon>
        <taxon>Mycoplasmatota</taxon>
        <taxon>Mycoplasmoidales</taxon>
        <taxon>Mycoplasmoidaceae</taxon>
        <taxon>Mycoplasmoides</taxon>
    </lineage>
</organism>
<dbReference type="EMBL" id="U00089">
    <property type="protein sequence ID" value="AAB96076.1"/>
    <property type="molecule type" value="Genomic_DNA"/>
</dbReference>
<dbReference type="PIR" id="S73754">
    <property type="entry name" value="S73754"/>
</dbReference>
<dbReference type="RefSeq" id="NP_110098.1">
    <property type="nucleotide sequence ID" value="NC_000912.1"/>
</dbReference>
<dbReference type="RefSeq" id="WP_010874766.1">
    <property type="nucleotide sequence ID" value="NZ_OU342337.1"/>
</dbReference>
<dbReference type="SMR" id="P75374"/>
<dbReference type="STRING" id="272634.MPN_410"/>
<dbReference type="EnsemblBacteria" id="AAB96076">
    <property type="protein sequence ID" value="AAB96076"/>
    <property type="gene ID" value="MPN_410"/>
</dbReference>
<dbReference type="KEGG" id="mpn:MPN_410"/>
<dbReference type="PATRIC" id="fig|272634.6.peg.445"/>
<dbReference type="HOGENOM" id="CLU_137918_0_0_14"/>
<dbReference type="BioCyc" id="MPNE272634:G1GJ3-663-MONOMER"/>
<dbReference type="Proteomes" id="UP000000808">
    <property type="component" value="Chromosome"/>
</dbReference>
<dbReference type="Gene3D" id="6.10.250.40">
    <property type="match status" value="1"/>
</dbReference>
<dbReference type="InterPro" id="IPR002862">
    <property type="entry name" value="DUF16"/>
</dbReference>
<dbReference type="Pfam" id="PF01519">
    <property type="entry name" value="DUF16"/>
    <property type="match status" value="1"/>
</dbReference>
<dbReference type="SUPFAM" id="SSF144266">
    <property type="entry name" value="MPN010-like"/>
    <property type="match status" value="1"/>
</dbReference>
<keyword id="KW-1185">Reference proteome</keyword>
<sequence>MKEKIPFYNEKEFNEMMKKTKKGTFSGWYIINPENNSVEFSGSFNRQFKLNKPIIPVNTEYVTRKEFNEYKDSNDQRLIKIETTLTAQGEQINKLTQTVEKQGEQIRELQVEQKAQGEQIKAQGETLKLILQTLQKMSDRLDKIDPPK</sequence>
<protein>
    <recommendedName>
        <fullName>UPF0134 protein MPN_410</fullName>
    </recommendedName>
</protein>
<gene>
    <name type="ordered locus">MPN_410</name>
    <name type="ORF">F11_orf148o</name>
    <name type="ORF">MP428</name>
</gene>
<accession>P75374</accession>
<evidence type="ECO:0000305" key="1"/>
<name>Y410_MYCPN</name>
<feature type="chain" id="PRO_0000221608" description="UPF0134 protein MPN_410">
    <location>
        <begin position="1"/>
        <end position="148"/>
    </location>
</feature>
<proteinExistence type="inferred from homology"/>